<sequence>MGDYIVRMTAAQGTVRAFGAMTTEMVGQAAEIHGLSPIATAALGRTMTAAGMMSKMLKGENDKLTIQLKGDGPLGGIVVVSDSKANVRGYVHNPNVYLPLNERGKLDIRTAMGYGYINVIRDMGLKEPYIGLSQLVSGEIADDLTYYFATSEQVPSTVALGVLIDATGVIGAGGFIVQMMPGAEEETVATLEKRLIGFPSVSKLISEGTTPEQILNMLLEGMEPKIVETVPCSFKCNCTRERMERNLISIGKKDLLEIFEDGKGAELQCHFCNTKYNFSHQDIENIVKENVK</sequence>
<reference key="1">
    <citation type="submission" date="2009-01" db="EMBL/GenBank/DDBJ databases">
        <title>Complete sequence of Clostridium cellulolyticum H10.</title>
        <authorList>
            <consortium name="US DOE Joint Genome Institute"/>
            <person name="Lucas S."/>
            <person name="Copeland A."/>
            <person name="Lapidus A."/>
            <person name="Glavina del Rio T."/>
            <person name="Dalin E."/>
            <person name="Tice H."/>
            <person name="Bruce D."/>
            <person name="Goodwin L."/>
            <person name="Pitluck S."/>
            <person name="Chertkov O."/>
            <person name="Saunders E."/>
            <person name="Brettin T."/>
            <person name="Detter J.C."/>
            <person name="Han C."/>
            <person name="Larimer F."/>
            <person name="Land M."/>
            <person name="Hauser L."/>
            <person name="Kyrpides N."/>
            <person name="Ivanova N."/>
            <person name="Zhou J."/>
            <person name="Richardson P."/>
        </authorList>
    </citation>
    <scope>NUCLEOTIDE SEQUENCE [LARGE SCALE GENOMIC DNA]</scope>
    <source>
        <strain>ATCC 35319 / DSM 5812 / JCM 6584 / H10</strain>
    </source>
</reference>
<proteinExistence type="inferred from homology"/>
<gene>
    <name evidence="1" type="primary">hslO</name>
    <name type="ordered locus">Ccel_2900</name>
</gene>
<accession>B8I894</accession>
<comment type="function">
    <text evidence="1">Redox regulated molecular chaperone. Protects both thermally unfolding and oxidatively damaged proteins from irreversible aggregation. Plays an important role in the bacterial defense system toward oxidative stress.</text>
</comment>
<comment type="subcellular location">
    <subcellularLocation>
        <location evidence="1">Cytoplasm</location>
    </subcellularLocation>
</comment>
<comment type="PTM">
    <text evidence="1">Under oxidizing conditions two disulfide bonds are formed involving the reactive cysteines. Under reducing conditions zinc is bound to the reactive cysteines and the protein is inactive.</text>
</comment>
<comment type="similarity">
    <text evidence="1">Belongs to the HSP33 family.</text>
</comment>
<feature type="chain" id="PRO_1000119256" description="33 kDa chaperonin">
    <location>
        <begin position="1"/>
        <end position="292"/>
    </location>
</feature>
<feature type="disulfide bond" description="Redox-active" evidence="1">
    <location>
        <begin position="236"/>
        <end position="238"/>
    </location>
</feature>
<feature type="disulfide bond" description="Redox-active" evidence="1">
    <location>
        <begin position="269"/>
        <end position="272"/>
    </location>
</feature>
<evidence type="ECO:0000255" key="1">
    <source>
        <dbReference type="HAMAP-Rule" id="MF_00117"/>
    </source>
</evidence>
<organism>
    <name type="scientific">Ruminiclostridium cellulolyticum (strain ATCC 35319 / DSM 5812 / JCM 6584 / H10)</name>
    <name type="common">Clostridium cellulolyticum</name>
    <dbReference type="NCBI Taxonomy" id="394503"/>
    <lineage>
        <taxon>Bacteria</taxon>
        <taxon>Bacillati</taxon>
        <taxon>Bacillota</taxon>
        <taxon>Clostridia</taxon>
        <taxon>Eubacteriales</taxon>
        <taxon>Oscillospiraceae</taxon>
        <taxon>Ruminiclostridium</taxon>
    </lineage>
</organism>
<dbReference type="EMBL" id="CP001348">
    <property type="protein sequence ID" value="ACL77194.1"/>
    <property type="molecule type" value="Genomic_DNA"/>
</dbReference>
<dbReference type="RefSeq" id="WP_015926261.1">
    <property type="nucleotide sequence ID" value="NC_011898.1"/>
</dbReference>
<dbReference type="SMR" id="B8I894"/>
<dbReference type="STRING" id="394503.Ccel_2900"/>
<dbReference type="KEGG" id="cce:Ccel_2900"/>
<dbReference type="eggNOG" id="COG1281">
    <property type="taxonomic scope" value="Bacteria"/>
</dbReference>
<dbReference type="HOGENOM" id="CLU_054493_1_0_9"/>
<dbReference type="OrthoDB" id="9776534at2"/>
<dbReference type="Proteomes" id="UP000001349">
    <property type="component" value="Chromosome"/>
</dbReference>
<dbReference type="GO" id="GO:0005737">
    <property type="term" value="C:cytoplasm"/>
    <property type="evidence" value="ECO:0007669"/>
    <property type="project" value="UniProtKB-SubCell"/>
</dbReference>
<dbReference type="GO" id="GO:0044183">
    <property type="term" value="F:protein folding chaperone"/>
    <property type="evidence" value="ECO:0007669"/>
    <property type="project" value="TreeGrafter"/>
</dbReference>
<dbReference type="GO" id="GO:0051082">
    <property type="term" value="F:unfolded protein binding"/>
    <property type="evidence" value="ECO:0007669"/>
    <property type="project" value="UniProtKB-UniRule"/>
</dbReference>
<dbReference type="GO" id="GO:0042026">
    <property type="term" value="P:protein refolding"/>
    <property type="evidence" value="ECO:0007669"/>
    <property type="project" value="TreeGrafter"/>
</dbReference>
<dbReference type="CDD" id="cd00498">
    <property type="entry name" value="Hsp33"/>
    <property type="match status" value="1"/>
</dbReference>
<dbReference type="Gene3D" id="3.55.30.10">
    <property type="entry name" value="Hsp33 domain"/>
    <property type="match status" value="1"/>
</dbReference>
<dbReference type="Gene3D" id="3.90.1280.10">
    <property type="entry name" value="HSP33 redox switch-like"/>
    <property type="match status" value="1"/>
</dbReference>
<dbReference type="HAMAP" id="MF_00117">
    <property type="entry name" value="HslO"/>
    <property type="match status" value="1"/>
</dbReference>
<dbReference type="InterPro" id="IPR000397">
    <property type="entry name" value="Heat_shock_Hsp33"/>
</dbReference>
<dbReference type="InterPro" id="IPR016154">
    <property type="entry name" value="Heat_shock_Hsp33_C"/>
</dbReference>
<dbReference type="InterPro" id="IPR016153">
    <property type="entry name" value="Heat_shock_Hsp33_N"/>
</dbReference>
<dbReference type="NCBIfam" id="NF001033">
    <property type="entry name" value="PRK00114.1"/>
    <property type="match status" value="1"/>
</dbReference>
<dbReference type="PANTHER" id="PTHR30111">
    <property type="entry name" value="33 KDA CHAPERONIN"/>
    <property type="match status" value="1"/>
</dbReference>
<dbReference type="PANTHER" id="PTHR30111:SF1">
    <property type="entry name" value="33 KDA CHAPERONIN"/>
    <property type="match status" value="1"/>
</dbReference>
<dbReference type="Pfam" id="PF01430">
    <property type="entry name" value="HSP33"/>
    <property type="match status" value="1"/>
</dbReference>
<dbReference type="PIRSF" id="PIRSF005261">
    <property type="entry name" value="Heat_shock_Hsp33"/>
    <property type="match status" value="1"/>
</dbReference>
<dbReference type="SUPFAM" id="SSF64397">
    <property type="entry name" value="Hsp33 domain"/>
    <property type="match status" value="1"/>
</dbReference>
<dbReference type="SUPFAM" id="SSF118352">
    <property type="entry name" value="HSP33 redox switch-like"/>
    <property type="match status" value="1"/>
</dbReference>
<name>HSLO_RUMCH</name>
<protein>
    <recommendedName>
        <fullName evidence="1">33 kDa chaperonin</fullName>
    </recommendedName>
    <alternativeName>
        <fullName evidence="1">Heat shock protein 33 homolog</fullName>
        <shortName evidence="1">HSP33</shortName>
    </alternativeName>
</protein>
<keyword id="KW-0143">Chaperone</keyword>
<keyword id="KW-0963">Cytoplasm</keyword>
<keyword id="KW-1015">Disulfide bond</keyword>
<keyword id="KW-0676">Redox-active center</keyword>
<keyword id="KW-1185">Reference proteome</keyword>
<keyword id="KW-0862">Zinc</keyword>